<keyword id="KW-0025">Alternative splicing</keyword>
<keyword id="KW-0325">Glycoprotein</keyword>
<keyword id="KW-0407">Ion channel</keyword>
<keyword id="KW-0406">Ion transport</keyword>
<keyword id="KW-0472">Membrane</keyword>
<keyword id="KW-1267">Proteomics identification</keyword>
<keyword id="KW-1185">Reference proteome</keyword>
<keyword id="KW-0812">Transmembrane</keyword>
<keyword id="KW-1133">Transmembrane helix</keyword>
<keyword id="KW-0813">Transport</keyword>
<reference key="1">
    <citation type="journal article" date="1996" name="FEBS Lett.">
        <title>A calcium switch for the functional coupling between alpha (hslo) and beta subunits (KV,Ca beta) of maxi K channels.</title>
        <authorList>
            <person name="Meera P."/>
            <person name="Wallner M."/>
            <person name="Jiang Z."/>
            <person name="Toro L."/>
        </authorList>
    </citation>
    <scope>NUCLEOTIDE SEQUENCE [MRNA] (ISOFORM 1)</scope>
    <source>
        <tissue>Uterus</tissue>
    </source>
</reference>
<reference key="2">
    <citation type="journal article" date="1996" name="J. Neurosci.">
        <title>Phenotypic alteration of a human BK (hSlo) channel by hSlobeta subunit coexpression: changes in blocker sensitivity, activation/relaxation and inactivation kinetics, and protein kinase A modulation.</title>
        <authorList>
            <person name="Dworetzky S.I."/>
            <person name="Boissard C.G."/>
            <person name="Lum-Ragan J.T."/>
            <person name="McKay M.C."/>
            <person name="Post-Munson D.J."/>
            <person name="Trojnacki J.T."/>
            <person name="Chang C.P."/>
            <person name="Gribkoff V.K."/>
        </authorList>
    </citation>
    <scope>NUCLEOTIDE SEQUENCE [MRNA] (ISOFORM 1)</scope>
    <source>
        <tissue>Uterus</tissue>
    </source>
</reference>
<reference key="3">
    <citation type="journal article" date="1996" name="Proc. Natl. Acad. Sci. U.S.A.">
        <title>Cloning, expression, and distribution of a Ca(2+)-activated K+ channel beta-subunit from human brain.</title>
        <authorList>
            <person name="Tseng-Crank J."/>
            <person name="Godinot N."/>
            <person name="Johansen T.E."/>
            <person name="Ahring P.K."/>
            <person name="Strobaek D."/>
            <person name="Mertz R."/>
            <person name="Foster C.D."/>
            <person name="Olesen S.P."/>
            <person name="Reinhart P.H."/>
        </authorList>
    </citation>
    <scope>NUCLEOTIDE SEQUENCE [GENOMIC DNA / MRNA] (ISOFORM 1)</scope>
    <source>
        <tissue>Brain</tissue>
    </source>
</reference>
<reference key="4">
    <citation type="submission" date="1997-06" db="EMBL/GenBank/DDBJ databases">
        <title>Sequence of the gene encoding the beta subunit of a human, large-conductance, calcium-activate, K+ channel.</title>
        <authorList>
            <person name="Folander K."/>
            <person name="Biazzo D."/>
            <person name="Swanson R."/>
        </authorList>
    </citation>
    <scope>NUCLEOTIDE SEQUENCE [GENOMIC DNA / MRNA] (ISOFORM 1)</scope>
    <source>
        <tissue>Aortic smooth muscle</tissue>
    </source>
</reference>
<reference key="5">
    <citation type="book" date="1998" name="The eye's aqueous humor, from secretion to glaucoma">
        <title>Identification of potassium channels in human lens epithelium.</title>
        <editorList>
            <person name="Civan M.M."/>
        </editorList>
        <authorList>
            <person name="Rae J.L."/>
            <person name="Shepard A.R."/>
        </authorList>
    </citation>
    <scope>NUCLEOTIDE SEQUENCE [MRNA] (ISOFORM 1)</scope>
</reference>
<reference key="6">
    <citation type="journal article" date="2002" name="Proc. West. Pharmacol. Soc.">
        <title>Calcium-activated potassium channel expression in human myometrium: effect of pregnancy.</title>
        <authorList>
            <person name="Mazzone J.N."/>
            <person name="Kaiser R.A."/>
            <person name="Buxton I.L.O."/>
        </authorList>
    </citation>
    <scope>NUCLEOTIDE SEQUENCE [MRNA] (ISOFORM 1)</scope>
    <source>
        <tissue>Myometrium</tissue>
    </source>
</reference>
<reference key="7">
    <citation type="submission" date="2003-12" db="EMBL/GenBank/DDBJ databases">
        <title>Role of the BK-beta1 subunit in human mesangial cells.</title>
        <authorList>
            <person name="Pluznick J.L."/>
            <person name="Sansom S.C."/>
        </authorList>
    </citation>
    <scope>NUCLEOTIDE SEQUENCE [MRNA] (ISOFORM 1)</scope>
</reference>
<reference key="8">
    <citation type="journal article" date="2004" name="Nat. Genet.">
        <title>Complete sequencing and characterization of 21,243 full-length human cDNAs.</title>
        <authorList>
            <person name="Ota T."/>
            <person name="Suzuki Y."/>
            <person name="Nishikawa T."/>
            <person name="Otsuki T."/>
            <person name="Sugiyama T."/>
            <person name="Irie R."/>
            <person name="Wakamatsu A."/>
            <person name="Hayashi K."/>
            <person name="Sato H."/>
            <person name="Nagai K."/>
            <person name="Kimura K."/>
            <person name="Makita H."/>
            <person name="Sekine M."/>
            <person name="Obayashi M."/>
            <person name="Nishi T."/>
            <person name="Shibahara T."/>
            <person name="Tanaka T."/>
            <person name="Ishii S."/>
            <person name="Yamamoto J."/>
            <person name="Saito K."/>
            <person name="Kawai Y."/>
            <person name="Isono Y."/>
            <person name="Nakamura Y."/>
            <person name="Nagahari K."/>
            <person name="Murakami K."/>
            <person name="Yasuda T."/>
            <person name="Iwayanagi T."/>
            <person name="Wagatsuma M."/>
            <person name="Shiratori A."/>
            <person name="Sudo H."/>
            <person name="Hosoiri T."/>
            <person name="Kaku Y."/>
            <person name="Kodaira H."/>
            <person name="Kondo H."/>
            <person name="Sugawara M."/>
            <person name="Takahashi M."/>
            <person name="Kanda K."/>
            <person name="Yokoi T."/>
            <person name="Furuya T."/>
            <person name="Kikkawa E."/>
            <person name="Omura Y."/>
            <person name="Abe K."/>
            <person name="Kamihara K."/>
            <person name="Katsuta N."/>
            <person name="Sato K."/>
            <person name="Tanikawa M."/>
            <person name="Yamazaki M."/>
            <person name="Ninomiya K."/>
            <person name="Ishibashi T."/>
            <person name="Yamashita H."/>
            <person name="Murakawa K."/>
            <person name="Fujimori K."/>
            <person name="Tanai H."/>
            <person name="Kimata M."/>
            <person name="Watanabe M."/>
            <person name="Hiraoka S."/>
            <person name="Chiba Y."/>
            <person name="Ishida S."/>
            <person name="Ono Y."/>
            <person name="Takiguchi S."/>
            <person name="Watanabe S."/>
            <person name="Yosida M."/>
            <person name="Hotuta T."/>
            <person name="Kusano J."/>
            <person name="Kanehori K."/>
            <person name="Takahashi-Fujii A."/>
            <person name="Hara H."/>
            <person name="Tanase T.-O."/>
            <person name="Nomura Y."/>
            <person name="Togiya S."/>
            <person name="Komai F."/>
            <person name="Hara R."/>
            <person name="Takeuchi K."/>
            <person name="Arita M."/>
            <person name="Imose N."/>
            <person name="Musashino K."/>
            <person name="Yuuki H."/>
            <person name="Oshima A."/>
            <person name="Sasaki N."/>
            <person name="Aotsuka S."/>
            <person name="Yoshikawa Y."/>
            <person name="Matsunawa H."/>
            <person name="Ichihara T."/>
            <person name="Shiohata N."/>
            <person name="Sano S."/>
            <person name="Moriya S."/>
            <person name="Momiyama H."/>
            <person name="Satoh N."/>
            <person name="Takami S."/>
            <person name="Terashima Y."/>
            <person name="Suzuki O."/>
            <person name="Nakagawa S."/>
            <person name="Senoh A."/>
            <person name="Mizoguchi H."/>
            <person name="Goto Y."/>
            <person name="Shimizu F."/>
            <person name="Wakebe H."/>
            <person name="Hishigaki H."/>
            <person name="Watanabe T."/>
            <person name="Sugiyama A."/>
            <person name="Takemoto M."/>
            <person name="Kawakami B."/>
            <person name="Yamazaki M."/>
            <person name="Watanabe K."/>
            <person name="Kumagai A."/>
            <person name="Itakura S."/>
            <person name="Fukuzumi Y."/>
            <person name="Fujimori Y."/>
            <person name="Komiyama M."/>
            <person name="Tashiro H."/>
            <person name="Tanigami A."/>
            <person name="Fujiwara T."/>
            <person name="Ono T."/>
            <person name="Yamada K."/>
            <person name="Fujii Y."/>
            <person name="Ozaki K."/>
            <person name="Hirao M."/>
            <person name="Ohmori Y."/>
            <person name="Kawabata A."/>
            <person name="Hikiji T."/>
            <person name="Kobatake N."/>
            <person name="Inagaki H."/>
            <person name="Ikema Y."/>
            <person name="Okamoto S."/>
            <person name="Okitani R."/>
            <person name="Kawakami T."/>
            <person name="Noguchi S."/>
            <person name="Itoh T."/>
            <person name="Shigeta K."/>
            <person name="Senba T."/>
            <person name="Matsumura K."/>
            <person name="Nakajima Y."/>
            <person name="Mizuno T."/>
            <person name="Morinaga M."/>
            <person name="Sasaki M."/>
            <person name="Togashi T."/>
            <person name="Oyama M."/>
            <person name="Hata H."/>
            <person name="Watanabe M."/>
            <person name="Komatsu T."/>
            <person name="Mizushima-Sugano J."/>
            <person name="Satoh T."/>
            <person name="Shirai Y."/>
            <person name="Takahashi Y."/>
            <person name="Nakagawa K."/>
            <person name="Okumura K."/>
            <person name="Nagase T."/>
            <person name="Nomura N."/>
            <person name="Kikuchi H."/>
            <person name="Masuho Y."/>
            <person name="Yamashita R."/>
            <person name="Nakai K."/>
            <person name="Yada T."/>
            <person name="Nakamura Y."/>
            <person name="Ohara O."/>
            <person name="Isogai T."/>
            <person name="Sugano S."/>
        </authorList>
    </citation>
    <scope>NUCLEOTIDE SEQUENCE [LARGE SCALE MRNA] (ISOFORM 1)</scope>
    <source>
        <tissue>Cervix</tissue>
    </source>
</reference>
<reference key="9">
    <citation type="submission" date="2005-09" db="EMBL/GenBank/DDBJ databases">
        <authorList>
            <person name="Mural R.J."/>
            <person name="Istrail S."/>
            <person name="Sutton G.G."/>
            <person name="Florea L."/>
            <person name="Halpern A.L."/>
            <person name="Mobarry C.M."/>
            <person name="Lippert R."/>
            <person name="Walenz B."/>
            <person name="Shatkay H."/>
            <person name="Dew I."/>
            <person name="Miller J.R."/>
            <person name="Flanigan M.J."/>
            <person name="Edwards N.J."/>
            <person name="Bolanos R."/>
            <person name="Fasulo D."/>
            <person name="Halldorsson B.V."/>
            <person name="Hannenhalli S."/>
            <person name="Turner R."/>
            <person name="Yooseph S."/>
            <person name="Lu F."/>
            <person name="Nusskern D.R."/>
            <person name="Shue B.C."/>
            <person name="Zheng X.H."/>
            <person name="Zhong F."/>
            <person name="Delcher A.L."/>
            <person name="Huson D.H."/>
            <person name="Kravitz S.A."/>
            <person name="Mouchard L."/>
            <person name="Reinert K."/>
            <person name="Remington K.A."/>
            <person name="Clark A.G."/>
            <person name="Waterman M.S."/>
            <person name="Eichler E.E."/>
            <person name="Adams M.D."/>
            <person name="Hunkapiller M.W."/>
            <person name="Myers E.W."/>
            <person name="Venter J.C."/>
        </authorList>
    </citation>
    <scope>NUCLEOTIDE SEQUENCE [LARGE SCALE GENOMIC DNA]</scope>
</reference>
<reference key="10">
    <citation type="journal article" date="2004" name="Genome Res.">
        <title>The status, quality, and expansion of the NIH full-length cDNA project: the Mammalian Gene Collection (MGC).</title>
        <authorList>
            <consortium name="The MGC Project Team"/>
        </authorList>
    </citation>
    <scope>NUCLEOTIDE SEQUENCE [LARGE SCALE MRNA] (ISOFORM 2)</scope>
    <source>
        <tissue>Pancreas</tissue>
    </source>
</reference>
<reference key="11">
    <citation type="journal article" date="2000" name="Proc. Natl. Acad. Sci. U.S.A.">
        <title>A neuronal beta subunit (KCNMB4) makes the large conductance, voltage- and Ca2+-activated K+ channel resistant to charybdotoxin and iberiotoxin.</title>
        <authorList>
            <person name="Meera P."/>
            <person name="Wallner M."/>
            <person name="Toro L."/>
        </authorList>
    </citation>
    <scope>GLYCOSYLATION</scope>
</reference>
<reference key="12">
    <citation type="journal article" date="1999" name="Science">
        <title>Acute activation of Maxi-K channels (hSlo) by estradiol binding to the beta subunit.</title>
        <authorList>
            <person name="Valverde M.A."/>
            <person name="Rojas P."/>
            <person name="Amigo J."/>
            <person name="Cosmelli D."/>
            <person name="Orio P."/>
            <person name="Bahamonde M.I."/>
            <person name="Mann G.E."/>
            <person name="Vergara C."/>
            <person name="Latorre R."/>
        </authorList>
    </citation>
    <scope>BINDING TO E2</scope>
</reference>
<reference key="13">
    <citation type="journal article" date="2002" name="News Physiol. Sci.">
        <title>New disguises for an old channel: MaxiK channel beta-subunits.</title>
        <authorList>
            <person name="Orio P."/>
            <person name="Rojas P."/>
            <person name="Ferreira G."/>
            <person name="Latorre R."/>
        </authorList>
    </citation>
    <scope>REVIEW</scope>
</reference>
<reference key="14">
    <citation type="journal article" date="2004" name="J. Clin. Invest.">
        <title>Gain-of-function mutation in the KCNMB1 potassium channel subunit is associated with low prevalence of diastolic hypertension.</title>
        <authorList>
            <person name="Fernandez-Fernandez J.M."/>
            <person name="Tomas M."/>
            <person name="Vazquez E."/>
            <person name="Orio P."/>
            <person name="Latorre R."/>
            <person name="Senti M."/>
            <person name="Marrugat J."/>
            <person name="Valverde M.A."/>
        </authorList>
    </citation>
    <scope>VARIANT LYS-65</scope>
    <scope>POLYMORPHISM</scope>
</reference>
<sequence>MVKKLVMAQKRGETRALCLGVTMVVCAVITYYILVTTVLPLYQKSVWTQESKCHLIETNIRDQEELKGKKVPQYPCLWVNVSAAGRWAVLYHTEDTRDQNQQCSYIPGSVDNYQTARADVEKVRAKFQEQQVFYCFSAPRGNETSVLFQRLYGPQALLFSLFWPTFLLTGGLLIIAMVKSNQYLSILAAQK</sequence>
<protein>
    <recommendedName>
        <fullName>Calcium-activated potassium channel subunit beta-1</fullName>
    </recommendedName>
    <alternativeName>
        <fullName>BK channel subunit beta-1</fullName>
        <shortName>BKbeta</shortName>
        <shortName>BKbeta1</shortName>
        <shortName>Hbeta1</shortName>
    </alternativeName>
    <alternativeName>
        <fullName>Calcium-activated potassium channel, subfamily M subunit beta-1</fullName>
        <shortName>Calcium-activated potassium channel subunit beta</shortName>
    </alternativeName>
    <alternativeName>
        <fullName>Charybdotoxin receptor subunit beta-1</fullName>
    </alternativeName>
    <alternativeName>
        <fullName>K(VCA)beta-1</fullName>
    </alternativeName>
    <alternativeName>
        <fullName>Maxi K channel subunit beta-1</fullName>
    </alternativeName>
    <alternativeName>
        <fullName>Slo-beta-1</fullName>
        <shortName>Slo-beta</shortName>
    </alternativeName>
</protein>
<proteinExistence type="evidence at protein level"/>
<accession>Q16558</accession>
<accession>O00707</accession>
<accession>O00708</accession>
<accession>P78475</accession>
<accession>Q53YR0</accession>
<accession>Q8TAX3</accession>
<accession>Q93005</accession>
<gene>
    <name type="primary">KCNMB1</name>
</gene>
<comment type="function">
    <text>Regulatory subunit of the calcium activated potassium KCNMA1 (maxiK) channel. Modulates the calcium sensitivity and gating kinetics of KCNMA1, thereby contributing to KCNMA1 channel diversity. Increases the apparent Ca(2+)/voltage sensitivity of the KCNMA1 channel. It also modifies KCNMA1 channel kinetics and alters its pharmacological properties. It slows down the activation and the deactivation kinetics of the channel. Acts as a negative regulator of smooth muscle contraction by enhancing the calcium sensitivity to KCNMA1. Its presence is also a requirement for internal binding of the KCNMA1 channel opener dehydrosoyasaponin I (DHS-1) triterpene glycoside and for external binding of the agonist hormone 17-beta-estradiol (E2). Increases the binding activity of charybdotoxin (CTX) toxin to KCNMA1 peptide blocker by increasing the CTX association rate and decreasing the dissociation rate.</text>
</comment>
<comment type="subunit">
    <text>Interacts with KCNMA1 tetramer. There are probably 4 molecules of KCMNB1 per KCNMA1 tetramer.</text>
</comment>
<comment type="interaction">
    <interactant intactId="EBI-17703887">
        <id>Q16558-2</id>
    </interactant>
    <interactant intactId="EBI-727240">
        <id>Q9UNK0</id>
        <label>STX8</label>
    </interactant>
    <organismsDiffer>false</organismsDiffer>
    <experiments>3</experiments>
</comment>
<comment type="subcellular location">
    <subcellularLocation>
        <location>Membrane</location>
        <topology>Multi-pass membrane protein</topology>
    </subcellularLocation>
</comment>
<comment type="alternative products">
    <event type="alternative splicing"/>
    <isoform>
        <id>Q16558-1</id>
        <name>1</name>
        <sequence type="displayed"/>
    </isoform>
    <isoform>
        <id>Q16558-2</id>
        <name>2</name>
        <sequence type="described" ref="VSP_009822 VSP_009823"/>
    </isoform>
</comment>
<comment type="tissue specificity">
    <text>Abundantly expressed in smooth muscle. Low levels of expression in most other tissues. Within the brain, relatively high levels found in hippocampus and corpus callosum.</text>
</comment>
<comment type="PTM">
    <text evidence="2">N-glycosylated.</text>
</comment>
<comment type="polymorphism">
    <text evidence="3">Genetic variation in KCNMB1 can influence the severity of diastolic hypertension (PubMed:15057310).</text>
</comment>
<comment type="similarity">
    <text evidence="5">Belongs to the KCNMB (TC 8.A.14.1) family. KCNMB1 subfamily.</text>
</comment>
<feature type="chain" id="PRO_0000187046" description="Calcium-activated potassium channel subunit beta-1">
    <location>
        <begin position="1"/>
        <end position="191"/>
    </location>
</feature>
<feature type="topological domain" description="Cytoplasmic" evidence="1">
    <location>
        <begin position="1"/>
        <end position="18"/>
    </location>
</feature>
<feature type="transmembrane region" description="Helical; Name=1" evidence="1">
    <location>
        <begin position="19"/>
        <end position="39"/>
    </location>
</feature>
<feature type="topological domain" description="Extracellular" evidence="1">
    <location>
        <begin position="40"/>
        <end position="157"/>
    </location>
</feature>
<feature type="transmembrane region" description="Helical; Name=2" evidence="1">
    <location>
        <begin position="158"/>
        <end position="178"/>
    </location>
</feature>
<feature type="topological domain" description="Cytoplasmic" evidence="1">
    <location>
        <begin position="179"/>
        <end position="191"/>
    </location>
</feature>
<feature type="glycosylation site" description="N-linked (GlcNAc...) asparagine" evidence="1">
    <location>
        <position position="80"/>
    </location>
</feature>
<feature type="glycosylation site" description="N-linked (GlcNAc...) asparagine" evidence="1">
    <location>
        <position position="142"/>
    </location>
</feature>
<feature type="splice variant" id="VSP_009822" description="In isoform 2." evidence="4">
    <original>CSYIPGSVDNYQTARADVEKVRAKFQEQ</original>
    <variation>VLNWRDGDTSLYPCQVCEPVPNCPCPRG</variation>
    <location>
        <begin position="103"/>
        <end position="130"/>
    </location>
</feature>
<feature type="splice variant" id="VSP_009823" description="In isoform 2." evidence="4">
    <location>
        <begin position="131"/>
        <end position="191"/>
    </location>
</feature>
<feature type="sequence variant" id="VAR_019325" description="Has a protective effect against diastolic hypertension; dbSNP:rs11739136." evidence="3">
    <original>E</original>
    <variation>K</variation>
    <location>
        <position position="65"/>
    </location>
</feature>
<feature type="sequence variant" id="VAR_047009" description="In dbSNP:rs2301149.">
    <original>V</original>
    <variation>L</variation>
    <location>
        <position position="110"/>
    </location>
</feature>
<evidence type="ECO:0000255" key="1"/>
<evidence type="ECO:0000269" key="2">
    <source>
    </source>
</evidence>
<evidence type="ECO:0000269" key="3">
    <source>
    </source>
</evidence>
<evidence type="ECO:0000303" key="4">
    <source>
    </source>
</evidence>
<evidence type="ECO:0000305" key="5"/>
<dbReference type="EMBL" id="U25138">
    <property type="protein sequence ID" value="AAB02394.1"/>
    <property type="molecule type" value="mRNA"/>
</dbReference>
<dbReference type="EMBL" id="U38907">
    <property type="protein sequence ID" value="AAA81327.1"/>
    <property type="molecule type" value="mRNA"/>
</dbReference>
<dbReference type="EMBL" id="U42600">
    <property type="protein sequence ID" value="AAB16827.1"/>
    <property type="molecule type" value="mRNA"/>
</dbReference>
<dbReference type="EMBL" id="U42601">
    <property type="protein sequence ID" value="AAB16825.1"/>
    <property type="molecule type" value="Genomic_DNA"/>
</dbReference>
<dbReference type="EMBL" id="U42603">
    <property type="protein sequence ID" value="AAB16826.1"/>
    <property type="molecule type" value="Genomic_DNA"/>
</dbReference>
<dbReference type="EMBL" id="U42602">
    <property type="protein sequence ID" value="AAB16826.1"/>
    <property type="status" value="JOINED"/>
    <property type="molecule type" value="Genomic_DNA"/>
</dbReference>
<dbReference type="EMBL" id="U61536">
    <property type="protein sequence ID" value="AAB61396.1"/>
    <property type="molecule type" value="mRNA"/>
</dbReference>
<dbReference type="EMBL" id="U61537">
    <property type="protein sequence ID" value="AAB61397.1"/>
    <property type="molecule type" value="Genomic_DNA"/>
</dbReference>
<dbReference type="EMBL" id="AF026002">
    <property type="protein sequence ID" value="AAB88805.1"/>
    <property type="molecule type" value="mRNA"/>
</dbReference>
<dbReference type="EMBL" id="AY044441">
    <property type="protein sequence ID" value="AAK95827.1"/>
    <property type="molecule type" value="mRNA"/>
</dbReference>
<dbReference type="EMBL" id="AY515264">
    <property type="protein sequence ID" value="AAS20193.1"/>
    <property type="molecule type" value="mRNA"/>
</dbReference>
<dbReference type="EMBL" id="AK313979">
    <property type="protein sequence ID" value="BAG36693.1"/>
    <property type="molecule type" value="mRNA"/>
</dbReference>
<dbReference type="EMBL" id="CH471062">
    <property type="protein sequence ID" value="EAW61474.1"/>
    <property type="molecule type" value="Genomic_DNA"/>
</dbReference>
<dbReference type="EMBL" id="BC025707">
    <property type="protein sequence ID" value="AAH25707.1"/>
    <property type="molecule type" value="mRNA"/>
</dbReference>
<dbReference type="CCDS" id="CCDS4373.1">
    <molecule id="Q16558-1"/>
</dbReference>
<dbReference type="PIR" id="S68842">
    <property type="entry name" value="S68842"/>
</dbReference>
<dbReference type="RefSeq" id="NP_004128.1">
    <molecule id="Q16558-1"/>
    <property type="nucleotide sequence ID" value="NM_004137.4"/>
</dbReference>
<dbReference type="SMR" id="Q16558"/>
<dbReference type="BioGRID" id="109980">
    <property type="interactions" value="7"/>
</dbReference>
<dbReference type="FunCoup" id="Q16558">
    <property type="interactions" value="237"/>
</dbReference>
<dbReference type="IntAct" id="Q16558">
    <property type="interactions" value="2"/>
</dbReference>
<dbReference type="STRING" id="9606.ENSP00000274629"/>
<dbReference type="BindingDB" id="Q16558"/>
<dbReference type="ChEMBL" id="CHEMBL5078"/>
<dbReference type="DrugBank" id="DB02587">
    <property type="generic name" value="Colforsin"/>
</dbReference>
<dbReference type="DrugBank" id="DB01110">
    <property type="generic name" value="Miconazole"/>
</dbReference>
<dbReference type="DrugBank" id="DB01054">
    <property type="generic name" value="Nitrendipine"/>
</dbReference>
<dbReference type="DrugBank" id="DB00721">
    <property type="generic name" value="Procaine"/>
</dbReference>
<dbReference type="DrugBank" id="DB00867">
    <property type="generic name" value="Ritodrine"/>
</dbReference>
<dbReference type="DrugBank" id="DB09089">
    <property type="generic name" value="Trimebutine"/>
</dbReference>
<dbReference type="TCDB" id="8.A.14.1.2">
    <property type="family name" value="the ca(2+)-activated k(+) channel auxiliary subunit slowpoke-Beta (sloBeta) family"/>
</dbReference>
<dbReference type="GlyCosmos" id="Q16558">
    <property type="glycosylation" value="2 sites, No reported glycans"/>
</dbReference>
<dbReference type="GlyGen" id="Q16558">
    <property type="glycosylation" value="2 sites"/>
</dbReference>
<dbReference type="PhosphoSitePlus" id="Q16558"/>
<dbReference type="BioMuta" id="KCNMB1"/>
<dbReference type="DMDM" id="292495100"/>
<dbReference type="MassIVE" id="Q16558"/>
<dbReference type="PaxDb" id="9606-ENSP00000274629"/>
<dbReference type="PeptideAtlas" id="Q16558"/>
<dbReference type="ProteomicsDB" id="60914">
    <molecule id="Q16558-1"/>
</dbReference>
<dbReference type="ProteomicsDB" id="60915">
    <molecule id="Q16558-2"/>
</dbReference>
<dbReference type="Antibodypedia" id="16897">
    <property type="antibodies" value="169 antibodies from 27 providers"/>
</dbReference>
<dbReference type="DNASU" id="3779"/>
<dbReference type="Ensembl" id="ENST00000274629.9">
    <molecule id="Q16558-1"/>
    <property type="protein sequence ID" value="ENSP00000274629.3"/>
    <property type="gene ID" value="ENSG00000145936.9"/>
</dbReference>
<dbReference type="Ensembl" id="ENST00000521859.1">
    <molecule id="Q16558-2"/>
    <property type="protein sequence ID" value="ENSP00000427940.1"/>
    <property type="gene ID" value="ENSG00000145936.9"/>
</dbReference>
<dbReference type="GeneID" id="3779"/>
<dbReference type="KEGG" id="hsa:3779"/>
<dbReference type="MANE-Select" id="ENST00000274629.9">
    <property type="protein sequence ID" value="ENSP00000274629.3"/>
    <property type="RefSeq nucleotide sequence ID" value="NM_004137.4"/>
    <property type="RefSeq protein sequence ID" value="NP_004128.1"/>
</dbReference>
<dbReference type="UCSC" id="uc003maq.3">
    <molecule id="Q16558-1"/>
    <property type="organism name" value="human"/>
</dbReference>
<dbReference type="AGR" id="HGNC:6285"/>
<dbReference type="CTD" id="3779"/>
<dbReference type="DisGeNET" id="3779"/>
<dbReference type="GeneCards" id="KCNMB1"/>
<dbReference type="HGNC" id="HGNC:6285">
    <property type="gene designation" value="KCNMB1"/>
</dbReference>
<dbReference type="HPA" id="ENSG00000145936">
    <property type="expression patterns" value="Tissue enhanced (endometrium, intestine, smooth muscle)"/>
</dbReference>
<dbReference type="MalaCards" id="KCNMB1"/>
<dbReference type="MIM" id="603951">
    <property type="type" value="gene"/>
</dbReference>
<dbReference type="MIM" id="608622">
    <property type="type" value="phenotype"/>
</dbReference>
<dbReference type="neXtProt" id="NX_Q16558"/>
<dbReference type="OpenTargets" id="ENSG00000145936"/>
<dbReference type="PharmGKB" id="PA221"/>
<dbReference type="VEuPathDB" id="HostDB:ENSG00000145936"/>
<dbReference type="eggNOG" id="ENOG502RZA0">
    <property type="taxonomic scope" value="Eukaryota"/>
</dbReference>
<dbReference type="GeneTree" id="ENSGT00950000183039"/>
<dbReference type="HOGENOM" id="CLU_085739_1_1_1"/>
<dbReference type="InParanoid" id="Q16558"/>
<dbReference type="OMA" id="PYPCLQV"/>
<dbReference type="OrthoDB" id="5962477at2759"/>
<dbReference type="PAN-GO" id="Q16558">
    <property type="GO annotations" value="4 GO annotations based on evolutionary models"/>
</dbReference>
<dbReference type="PhylomeDB" id="Q16558"/>
<dbReference type="TreeFam" id="TF328589"/>
<dbReference type="PathwayCommons" id="Q16558"/>
<dbReference type="Reactome" id="R-HSA-1296052">
    <property type="pathway name" value="Ca2+ activated K+ channels"/>
</dbReference>
<dbReference type="Reactome" id="R-HSA-418457">
    <property type="pathway name" value="cGMP effects"/>
</dbReference>
<dbReference type="Reactome" id="R-HSA-9662360">
    <property type="pathway name" value="Sensory processing of sound by inner hair cells of the cochlea"/>
</dbReference>
<dbReference type="Reactome" id="R-HSA-9667769">
    <property type="pathway name" value="Acetylcholine inhibits contraction of outer hair cells"/>
</dbReference>
<dbReference type="SignaLink" id="Q16558"/>
<dbReference type="BioGRID-ORCS" id="3779">
    <property type="hits" value="11 hits in 1148 CRISPR screens"/>
</dbReference>
<dbReference type="ChiTaRS" id="KCNMB1">
    <property type="organism name" value="human"/>
</dbReference>
<dbReference type="GeneWiki" id="KCNMB1"/>
<dbReference type="GenomeRNAi" id="3779"/>
<dbReference type="Pharos" id="Q16558">
    <property type="development level" value="Tbio"/>
</dbReference>
<dbReference type="PRO" id="PR:Q16558"/>
<dbReference type="Proteomes" id="UP000005640">
    <property type="component" value="Chromosome 5"/>
</dbReference>
<dbReference type="RNAct" id="Q16558">
    <property type="molecule type" value="protein"/>
</dbReference>
<dbReference type="Bgee" id="ENSG00000145936">
    <property type="expression patterns" value="Expressed in blood vessel layer and 124 other cell types or tissues"/>
</dbReference>
<dbReference type="GO" id="GO:0005886">
    <property type="term" value="C:plasma membrane"/>
    <property type="evidence" value="ECO:0000304"/>
    <property type="project" value="Reactome"/>
</dbReference>
<dbReference type="GO" id="GO:0045202">
    <property type="term" value="C:synapse"/>
    <property type="evidence" value="ECO:0007669"/>
    <property type="project" value="GOC"/>
</dbReference>
<dbReference type="GO" id="GO:0008076">
    <property type="term" value="C:voltage-gated potassium channel complex"/>
    <property type="evidence" value="ECO:0000318"/>
    <property type="project" value="GO_Central"/>
</dbReference>
<dbReference type="GO" id="GO:0015269">
    <property type="term" value="F:calcium-activated potassium channel activity"/>
    <property type="evidence" value="ECO:0000318"/>
    <property type="project" value="GO_Central"/>
</dbReference>
<dbReference type="GO" id="GO:0015459">
    <property type="term" value="F:potassium channel regulator activity"/>
    <property type="evidence" value="ECO:0000318"/>
    <property type="project" value="GO_Central"/>
</dbReference>
<dbReference type="GO" id="GO:0007268">
    <property type="term" value="P:chemical synaptic transmission"/>
    <property type="evidence" value="ECO:0000304"/>
    <property type="project" value="ProtInc"/>
</dbReference>
<dbReference type="GO" id="GO:0005513">
    <property type="term" value="P:detection of calcium ion"/>
    <property type="evidence" value="ECO:0000318"/>
    <property type="project" value="GO_Central"/>
</dbReference>
<dbReference type="GO" id="GO:0006813">
    <property type="term" value="P:potassium ion transport"/>
    <property type="evidence" value="ECO:0000304"/>
    <property type="project" value="ProtInc"/>
</dbReference>
<dbReference type="InterPro" id="IPR003930">
    <property type="entry name" value="K_chnl_Ca-activ_BK_bsu"/>
</dbReference>
<dbReference type="PANTHER" id="PTHR10258">
    <property type="entry name" value="CALCIUM-ACTIVATED POTASSIUM CHANNEL SUBUNIT BETA"/>
    <property type="match status" value="1"/>
</dbReference>
<dbReference type="PANTHER" id="PTHR10258:SF1">
    <property type="entry name" value="CALCIUM-ACTIVATED POTASSIUM CHANNEL SUBUNIT BETA-1"/>
    <property type="match status" value="1"/>
</dbReference>
<dbReference type="Pfam" id="PF03185">
    <property type="entry name" value="CaKB"/>
    <property type="match status" value="1"/>
</dbReference>
<dbReference type="PRINTS" id="PR01450">
    <property type="entry name" value="BKCHANNELB"/>
</dbReference>
<name>KCMB1_HUMAN</name>
<organism>
    <name type="scientific">Homo sapiens</name>
    <name type="common">Human</name>
    <dbReference type="NCBI Taxonomy" id="9606"/>
    <lineage>
        <taxon>Eukaryota</taxon>
        <taxon>Metazoa</taxon>
        <taxon>Chordata</taxon>
        <taxon>Craniata</taxon>
        <taxon>Vertebrata</taxon>
        <taxon>Euteleostomi</taxon>
        <taxon>Mammalia</taxon>
        <taxon>Eutheria</taxon>
        <taxon>Euarchontoglires</taxon>
        <taxon>Primates</taxon>
        <taxon>Haplorrhini</taxon>
        <taxon>Catarrhini</taxon>
        <taxon>Hominidae</taxon>
        <taxon>Homo</taxon>
    </lineage>
</organism>